<accession>Q62052</accession>
<accession>Q0VBP9</accession>
<reference key="1">
    <citation type="journal article" date="1992" name="Science">
        <title>The mouse pink-eyed dilution gene: association with human Prader-Willi and Angelman syndromes.</title>
        <authorList>
            <person name="Gardner J.M."/>
            <person name="Nakatsu Y."/>
            <person name="Gondo Y."/>
            <person name="Lee S."/>
            <person name="Lyon M.F."/>
            <person name="King R.A."/>
            <person name="Brilliant M.H."/>
        </authorList>
    </citation>
    <scope>NUCLEOTIDE SEQUENCE [MRNA]</scope>
    <scope>TISSUE SPECIFICITY</scope>
    <scope>DISEASE</scope>
    <source>
        <strain>C57BL/6J</strain>
        <tissue>Skin</tissue>
    </source>
</reference>
<reference key="2">
    <citation type="journal article" date="2004" name="Genome Res.">
        <title>The status, quality, and expansion of the NIH full-length cDNA project: the Mammalian Gene Collection (MGC).</title>
        <authorList>
            <consortium name="The MGC Project Team"/>
        </authorList>
    </citation>
    <scope>NUCLEOTIDE SEQUENCE [LARGE SCALE MRNA]</scope>
    <source>
        <tissue>Brain</tissue>
    </source>
</reference>
<reference key="3">
    <citation type="journal article" date="1994" name="Proc. Natl. Acad. Sci. U.S.A.">
        <title>Identification of a melanosomal membrane protein encoded by the pink-eyed dilution (type II oculocutaneous albinism) gene.</title>
        <authorList>
            <person name="Rosemblat S."/>
            <person name="Durham-Pierre D."/>
            <person name="Gardner J.M."/>
            <person name="Nakatsu Y."/>
            <person name="Brilliant M.H."/>
            <person name="Orlow S.J."/>
        </authorList>
    </citation>
    <scope>CHARACTERIZATION OF PROTEIN PRODUCT</scope>
    <scope>SUBCELLULAR LOCATION</scope>
</reference>
<reference key="4">
    <citation type="journal article" date="2001" name="Pigment Cell Res.">
        <title>The mouse p (pink-eyed dilution) and human P genes, oculocutaneous albinism type 2 (OCA2), and melanosomal pH.</title>
        <authorList>
            <person name="Brilliant M.H."/>
        </authorList>
    </citation>
    <scope>REVIEW OF FUNCTION</scope>
</reference>
<reference key="5">
    <citation type="journal article" date="2001" name="Pigment Cell Res.">
        <title>Inverse correlation between pink-eyed dilution protein expression and induction of melanogenesis by bafilomycin A1.</title>
        <authorList>
            <person name="Manga P."/>
            <person name="Orlow S.J."/>
        </authorList>
    </citation>
    <scope>INDUCTION OF MELANINE SYNTHESIS BY BAFILOMYCIN A1 ON P-NULL MELANOCYTES</scope>
</reference>
<reference key="6">
    <citation type="journal article" date="2002" name="Mol. Biol. Cell">
        <title>Pink-eyed dilution protein controls the processing of tyrosinase.</title>
        <authorList>
            <person name="Chen K."/>
            <person name="Manga P."/>
            <person name="Orlow S.J."/>
        </authorList>
    </citation>
    <scope>INVOLVEMENT IN POST-TRANSLATIONAL PROCESSING OF TYROSINASE</scope>
</reference>
<reference key="7">
    <citation type="journal article" date="2002" name="Mol. Biol. Cell">
        <title>Pink-eyed dilution protein modulates arsenic sensitivity and intracellular glutathione metabolism.</title>
        <authorList>
            <person name="Staleva L."/>
            <person name="Manga P."/>
            <person name="Orlow S.J."/>
        </authorList>
    </citation>
    <scope>INVOLVEMENT IN INTRACELLULAR GLUTATHIONE METABOLISM</scope>
</reference>
<evidence type="ECO:0000250" key="1">
    <source>
        <dbReference type="UniProtKB" id="Q04671"/>
    </source>
</evidence>
<evidence type="ECO:0000255" key="2"/>
<evidence type="ECO:0000269" key="3">
    <source>
    </source>
</evidence>
<evidence type="ECO:0000269" key="4">
    <source>
    </source>
</evidence>
<evidence type="ECO:0000269" key="5">
    <source>
    </source>
</evidence>
<evidence type="ECO:0000305" key="6"/>
<evidence type="ECO:0000305" key="7">
    <source>
    </source>
</evidence>
<protein>
    <recommendedName>
        <fullName>P protein</fullName>
    </recommendedName>
    <alternativeName>
        <fullName>Melanocyte-specific transporter protein</fullName>
    </alternativeName>
    <alternativeName>
        <fullName>Pink-eyed dilution protein</fullName>
    </alternativeName>
</protein>
<keyword id="KW-0015">Albinism</keyword>
<keyword id="KW-0325">Glycoprotein</keyword>
<keyword id="KW-0472">Membrane</keyword>
<keyword id="KW-1185">Reference proteome</keyword>
<keyword id="KW-0812">Transmembrane</keyword>
<keyword id="KW-1133">Transmembrane helix</keyword>
<keyword id="KW-0813">Transport</keyword>
<sequence>MRLENKDIRLASAVLEVELHQTSALSVPTCPDPGRLLTVKPATSNYKLGQADPCIPYAGEAAGKSVCVPEHTEFGSFLVKGSSSLKDLSFKEDTPLLWNSSQKKRSQLMPVHHPEFIATEGSWENGLTAWEQKCMLGKEVADLSALASSEKRDLAGSVHLRAQVSKLGCCVRWIKITGLFVFVVLCSILFSLYPDQGKFWQLLAVSPLENYSVNLSGHADSMILQLDLAGALMAGGPSGSGKEEHVVVVVTQTDAAGNRRRRPQQLTYNWTVLLNPRSEHVVVSRTFEIVSREAVSISIQASLQQTRLVPLLLAHQFLGASVEAQVASAVAILAGVYTLIIFEIVHRTLAAMLGALAALAALAVVGDRPSLTHVVEWIDFETLALLFGMMILVAVFSETGFFDYCAVKAYQLSRGRVWAMIFMLCLMAAILSAFLDNVTTMLLFTPVTIRLCEVLNLDPRQVLIAEVIFTNIGGAATAIGDPPNVIIVSNQELRKMGLDFAGFTAHMFLGICLVLLVSFPLLRLLYWNKKLYNKEPSEIVELKHEIHVWRLTAQRISPASREETAVRGLLLEKVLALEHLLAQRLHTFHRQISQEDKNWETNIQELQRKHRISDRSLLVKCLTVLGFVISMFFLNSFVPGIHLDLGWIAILGAIWLLILADIHDFEIILHRVEWATLLFFAALFVLMEALTHLHLVEYVGEQTALLIKMVPEDQRFAAAIVLIVWVSALASSLIDNIPFTATMIPVLLNLSQDPEISLPALPLMYALALGACLGGNGTLIGASTNVVCAGIAEKHGYGFSFMEFFRLGFPVMLMSCTIGMCYLLIAHIVVGWN</sequence>
<organism>
    <name type="scientific">Mus musculus</name>
    <name type="common">Mouse</name>
    <dbReference type="NCBI Taxonomy" id="10090"/>
    <lineage>
        <taxon>Eukaryota</taxon>
        <taxon>Metazoa</taxon>
        <taxon>Chordata</taxon>
        <taxon>Craniata</taxon>
        <taxon>Vertebrata</taxon>
        <taxon>Euteleostomi</taxon>
        <taxon>Mammalia</taxon>
        <taxon>Eutheria</taxon>
        <taxon>Euarchontoglires</taxon>
        <taxon>Glires</taxon>
        <taxon>Rodentia</taxon>
        <taxon>Myomorpha</taxon>
        <taxon>Muroidea</taxon>
        <taxon>Muridae</taxon>
        <taxon>Murinae</taxon>
        <taxon>Mus</taxon>
        <taxon>Mus</taxon>
    </lineage>
</organism>
<feature type="chain" id="PRO_0000172510" description="P protein">
    <location>
        <begin position="1"/>
        <end position="833"/>
    </location>
</feature>
<feature type="topological domain" description="Cytoplasmic" evidence="2">
    <location>
        <begin position="1"/>
        <end position="172"/>
    </location>
</feature>
<feature type="transmembrane region" description="Helical" evidence="2">
    <location>
        <begin position="173"/>
        <end position="193"/>
    </location>
</feature>
<feature type="topological domain" description="Extracellular" evidence="2">
    <location>
        <begin position="194"/>
        <end position="325"/>
    </location>
</feature>
<feature type="transmembrane region" description="Helical" evidence="2">
    <location>
        <begin position="326"/>
        <end position="346"/>
    </location>
</feature>
<feature type="topological domain" description="Cytoplasmic" evidence="2">
    <location>
        <begin position="347"/>
        <end position="348"/>
    </location>
</feature>
<feature type="transmembrane region" description="Helical" evidence="2">
    <location>
        <begin position="349"/>
        <end position="369"/>
    </location>
</feature>
<feature type="topological domain" description="Extracellular" evidence="2">
    <location>
        <begin position="370"/>
        <end position="381"/>
    </location>
</feature>
<feature type="transmembrane region" description="Helical" evidence="2">
    <location>
        <begin position="382"/>
        <end position="402"/>
    </location>
</feature>
<feature type="topological domain" description="Cytoplasmic" evidence="2">
    <location>
        <begin position="403"/>
        <end position="417"/>
    </location>
</feature>
<feature type="transmembrane region" description="Helical" evidence="2">
    <location>
        <begin position="418"/>
        <end position="438"/>
    </location>
</feature>
<feature type="topological domain" description="Extracellular" evidence="2">
    <location>
        <begin position="439"/>
        <end position="501"/>
    </location>
</feature>
<feature type="transmembrane region" description="Helical" evidence="2">
    <location>
        <begin position="502"/>
        <end position="522"/>
    </location>
</feature>
<feature type="topological domain" description="Cytoplasmic" evidence="2">
    <location>
        <begin position="523"/>
        <end position="617"/>
    </location>
</feature>
<feature type="transmembrane region" description="Helical" evidence="2">
    <location>
        <begin position="618"/>
        <end position="638"/>
    </location>
</feature>
<feature type="topological domain" description="Extracellular" evidence="2">
    <location>
        <position position="639"/>
    </location>
</feature>
<feature type="transmembrane region" description="Helical" evidence="2">
    <location>
        <begin position="640"/>
        <end position="660"/>
    </location>
</feature>
<feature type="topological domain" description="Cytoplasmic" evidence="2">
    <location>
        <begin position="661"/>
        <end position="675"/>
    </location>
</feature>
<feature type="transmembrane region" description="Helical" evidence="2">
    <location>
        <begin position="676"/>
        <end position="696"/>
    </location>
</feature>
<feature type="topological domain" description="Extracellular" evidence="2">
    <location>
        <begin position="697"/>
        <end position="718"/>
    </location>
</feature>
<feature type="transmembrane region" description="Helical" evidence="2">
    <location>
        <begin position="719"/>
        <end position="739"/>
    </location>
</feature>
<feature type="topological domain" description="Cytoplasmic" evidence="2">
    <location>
        <begin position="740"/>
        <end position="759"/>
    </location>
</feature>
<feature type="transmembrane region" description="Helical" evidence="2">
    <location>
        <begin position="760"/>
        <end position="780"/>
    </location>
</feature>
<feature type="topological domain" description="Extracellular" evidence="2">
    <location>
        <begin position="781"/>
        <end position="810"/>
    </location>
</feature>
<feature type="transmembrane region" description="Helical" evidence="2">
    <location>
        <begin position="811"/>
        <end position="831"/>
    </location>
</feature>
<feature type="topological domain" description="Cytoplasmic" evidence="2">
    <location>
        <begin position="832"/>
        <end position="833"/>
    </location>
</feature>
<feature type="glycosylation site" description="N-linked (GlcNAc...) asparagine" evidence="2">
    <location>
        <position position="210"/>
    </location>
</feature>
<feature type="glycosylation site" description="N-linked (GlcNAc...) asparagine" evidence="2">
    <location>
        <position position="214"/>
    </location>
</feature>
<feature type="glycosylation site" description="N-linked (GlcNAc...) asparagine" evidence="2">
    <location>
        <position position="269"/>
    </location>
</feature>
<proteinExistence type="evidence at protein level"/>
<comment type="function">
    <text evidence="1 3 7">Contributes to a melanosome-specific anion (chloride) current that modulates melanosomal pH for optimal tyrosinase activity required for melanogenesis and the melanosome maturation. One of the components of the mammalian pigmentary system (By similarity). May serve as a key control point at which color variation is determined. Major determinant of eye color (Probable). Seems to regulate the post-translational processing of tyrosinase, which catalyzes the limiting reaction in melanin synthesis (PubMed:12058062).</text>
</comment>
<comment type="catalytic activity">
    <reaction evidence="1">
        <text>chloride(in) = chloride(out)</text>
        <dbReference type="Rhea" id="RHEA:29823"/>
        <dbReference type="ChEBI" id="CHEBI:17996"/>
    </reaction>
</comment>
<comment type="subcellular location">
    <subcellularLocation>
        <location evidence="5">Melanosome membrane</location>
        <topology evidence="5">Multi-pass membrane protein</topology>
    </subcellularLocation>
</comment>
<comment type="tissue specificity">
    <text evidence="4">Most abundant in melanocytes. Also present in neonatal and adult eye tissue presumably as a result of expression in the retinal pigmented epithelium and choroid body, known sites of melanogenesis in the eye. Small but detectable amounts also observed in fetal, neonatal and adult brain. Moderate amounts detected in adult testis and ovary. Not detected in heart, kidney, spleen, liver or thymus.</text>
</comment>
<comment type="disease">
    <text evidence="4">Defects in Oca2 are a cause of hypopigmentation of the eyes, skin, and fur. The protein is missing or altered in six independent mutant alleles of the OCA2 locus, suggesting that disruption of this gene results in hypopigmentation phenotype that defines mutant OCA2 alleles.</text>
</comment>
<comment type="similarity">
    <text evidence="6">Belongs to the CitM (TC 2.A.11) transporter family.</text>
</comment>
<comment type="online information" name="Protein Spotlight">
    <link uri="https://www.proteinspotlight.org/back_issues/054"/>
    <text>Questioning colour - Issue 54 of January 2005</text>
</comment>
<dbReference type="EMBL" id="M97900">
    <property type="protein sequence ID" value="AAA39908.1"/>
    <property type="molecule type" value="mRNA"/>
</dbReference>
<dbReference type="EMBL" id="BC119220">
    <property type="protein sequence ID" value="AAI19221.1"/>
    <property type="molecule type" value="mRNA"/>
</dbReference>
<dbReference type="EMBL" id="BC120549">
    <property type="protein sequence ID" value="AAI20550.1"/>
    <property type="molecule type" value="mRNA"/>
</dbReference>
<dbReference type="CCDS" id="CCDS21319.1"/>
<dbReference type="RefSeq" id="NP_068679.1">
    <property type="nucleotide sequence ID" value="NM_021879.3"/>
</dbReference>
<dbReference type="RefSeq" id="XP_006540762.1">
    <property type="nucleotide sequence ID" value="XM_006540699.1"/>
</dbReference>
<dbReference type="SMR" id="Q62052"/>
<dbReference type="FunCoup" id="Q62052">
    <property type="interactions" value="16"/>
</dbReference>
<dbReference type="STRING" id="10090.ENSMUSP00000032633"/>
<dbReference type="GlyCosmos" id="Q62052">
    <property type="glycosylation" value="3 sites, No reported glycans"/>
</dbReference>
<dbReference type="GlyGen" id="Q62052">
    <property type="glycosylation" value="3 sites"/>
</dbReference>
<dbReference type="iPTMnet" id="Q62052"/>
<dbReference type="PhosphoSitePlus" id="Q62052"/>
<dbReference type="PaxDb" id="10090-ENSMUSP00000032633"/>
<dbReference type="ProteomicsDB" id="300366"/>
<dbReference type="Antibodypedia" id="22329">
    <property type="antibodies" value="187 antibodies from 25 providers"/>
</dbReference>
<dbReference type="DNASU" id="18431"/>
<dbReference type="Ensembl" id="ENSMUST00000032633.12">
    <property type="protein sequence ID" value="ENSMUSP00000032633.6"/>
    <property type="gene ID" value="ENSMUSG00000030450.12"/>
</dbReference>
<dbReference type="GeneID" id="18431"/>
<dbReference type="KEGG" id="mmu:18431"/>
<dbReference type="UCSC" id="uc009hdy.1">
    <property type="organism name" value="mouse"/>
</dbReference>
<dbReference type="AGR" id="MGI:97454"/>
<dbReference type="CTD" id="4948"/>
<dbReference type="MGI" id="MGI:97454">
    <property type="gene designation" value="Oca2"/>
</dbReference>
<dbReference type="VEuPathDB" id="HostDB:ENSMUSG00000030450"/>
<dbReference type="eggNOG" id="KOG2639">
    <property type="taxonomic scope" value="Eukaryota"/>
</dbReference>
<dbReference type="GeneTree" id="ENSGT01030000234550"/>
<dbReference type="HOGENOM" id="CLU_011920_2_1_1"/>
<dbReference type="InParanoid" id="Q62052"/>
<dbReference type="OMA" id="HHRIRDK"/>
<dbReference type="OrthoDB" id="442352at2759"/>
<dbReference type="PhylomeDB" id="Q62052"/>
<dbReference type="TreeFam" id="TF323556"/>
<dbReference type="Reactome" id="R-MMU-5662702">
    <property type="pathway name" value="Melanin biosynthesis"/>
</dbReference>
<dbReference type="BioGRID-ORCS" id="18431">
    <property type="hits" value="3 hits in 76 CRISPR screens"/>
</dbReference>
<dbReference type="ChiTaRS" id="Oca2">
    <property type="organism name" value="mouse"/>
</dbReference>
<dbReference type="PRO" id="PR:Q62052"/>
<dbReference type="Proteomes" id="UP000000589">
    <property type="component" value="Chromosome 7"/>
</dbReference>
<dbReference type="RNAct" id="Q62052">
    <property type="molecule type" value="protein"/>
</dbReference>
<dbReference type="Bgee" id="ENSMUSG00000030450">
    <property type="expression patterns" value="Expressed in iris and 54 other cell types or tissues"/>
</dbReference>
<dbReference type="ExpressionAtlas" id="Q62052">
    <property type="expression patterns" value="baseline and differential"/>
</dbReference>
<dbReference type="GO" id="GO:0005789">
    <property type="term" value="C:endoplasmic reticulum membrane"/>
    <property type="evidence" value="ECO:0007669"/>
    <property type="project" value="Ensembl"/>
</dbReference>
<dbReference type="GO" id="GO:0010008">
    <property type="term" value="C:endosome membrane"/>
    <property type="evidence" value="ECO:0007669"/>
    <property type="project" value="Ensembl"/>
</dbReference>
<dbReference type="GO" id="GO:0005765">
    <property type="term" value="C:lysosomal membrane"/>
    <property type="evidence" value="ECO:0007669"/>
    <property type="project" value="Ensembl"/>
</dbReference>
<dbReference type="GO" id="GO:0033162">
    <property type="term" value="C:melanosome membrane"/>
    <property type="evidence" value="ECO:0007669"/>
    <property type="project" value="UniProtKB-SubCell"/>
</dbReference>
<dbReference type="GO" id="GO:0005254">
    <property type="term" value="F:chloride channel activity"/>
    <property type="evidence" value="ECO:0000250"/>
    <property type="project" value="UniProtKB"/>
</dbReference>
<dbReference type="GO" id="GO:0008283">
    <property type="term" value="P:cell population proliferation"/>
    <property type="evidence" value="ECO:0000315"/>
    <property type="project" value="MGI"/>
</dbReference>
<dbReference type="GO" id="GO:0048066">
    <property type="term" value="P:developmental pigmentation"/>
    <property type="evidence" value="ECO:0000315"/>
    <property type="project" value="MGI"/>
</dbReference>
<dbReference type="GO" id="GO:0035752">
    <property type="term" value="P:lysosomal lumen pH elevation"/>
    <property type="evidence" value="ECO:0000250"/>
    <property type="project" value="UniProtKB"/>
</dbReference>
<dbReference type="GO" id="GO:0042438">
    <property type="term" value="P:melanin biosynthetic process"/>
    <property type="evidence" value="ECO:0000315"/>
    <property type="project" value="MGI"/>
</dbReference>
<dbReference type="GO" id="GO:0006583">
    <property type="term" value="P:melanin biosynthetic process from tyrosine"/>
    <property type="evidence" value="ECO:0000250"/>
    <property type="project" value="UniProtKB"/>
</dbReference>
<dbReference type="GO" id="GO:0030318">
    <property type="term" value="P:melanocyte differentiation"/>
    <property type="evidence" value="ECO:0000315"/>
    <property type="project" value="MGI"/>
</dbReference>
<dbReference type="GO" id="GO:0043473">
    <property type="term" value="P:pigmentation"/>
    <property type="evidence" value="ECO:0000315"/>
    <property type="project" value="MGI"/>
</dbReference>
<dbReference type="GO" id="GO:0007286">
    <property type="term" value="P:spermatid development"/>
    <property type="evidence" value="ECO:0000315"/>
    <property type="project" value="MGI"/>
</dbReference>
<dbReference type="CDD" id="cd01116">
    <property type="entry name" value="P_permease"/>
    <property type="match status" value="1"/>
</dbReference>
<dbReference type="InterPro" id="IPR004680">
    <property type="entry name" value="Cit_transptr-like_dom"/>
</dbReference>
<dbReference type="InterPro" id="IPR051475">
    <property type="entry name" value="Diverse_Ion_Transporter"/>
</dbReference>
<dbReference type="PANTHER" id="PTHR43568">
    <property type="entry name" value="P PROTEIN"/>
    <property type="match status" value="1"/>
</dbReference>
<dbReference type="PANTHER" id="PTHR43568:SF1">
    <property type="entry name" value="P PROTEIN"/>
    <property type="match status" value="1"/>
</dbReference>
<dbReference type="Pfam" id="PF03600">
    <property type="entry name" value="CitMHS"/>
    <property type="match status" value="1"/>
</dbReference>
<name>P_MOUSE</name>
<gene>
    <name type="primary">Oca2</name>
    <name type="synonym">P</name>
</gene>